<keyword id="KW-0002">3D-structure</keyword>
<keyword id="KW-0963">Cytoplasm</keyword>
<keyword id="KW-1185">Reference proteome</keyword>
<keyword id="KW-0687">Ribonucleoprotein</keyword>
<keyword id="KW-0689">Ribosomal protein</keyword>
<proteinExistence type="evidence at protein level"/>
<comment type="function">
    <text evidence="3 4 8">RNA-binding component of the large ribosomal subunit (PubMed:26245381, PubMed:27863242, PubMed:30517857). The ribosome is a large ribonucleoprotein complex responsible for the synthesis of proteins in the cell (PubMed:26245381, PubMed:27863242, PubMed:30517857).</text>
</comment>
<comment type="subunit">
    <text evidence="1 2 3 4 5 6 7 8 9 10 11 12 13 14 15">Component of the large ribosomal subunit (PubMed:26245381, PubMed:27863242, PubMed:29856316, PubMed:30293783, PubMed:30355441, PubMed:30517857, PubMed:31246176, PubMed:31609474, PubMed:31768042, PubMed:33296660, PubMed:35679869, PubMed:35709277, PubMed:36653451). Interacts with IMPACT (By similarity).</text>
</comment>
<comment type="subcellular location">
    <subcellularLocation>
        <location evidence="3 4 5 6 7 8 9 10 11 12 13 14 15">Cytoplasm</location>
    </subcellularLocation>
</comment>
<comment type="similarity">
    <text evidence="16">Belongs to the eukaryotic ribosomal protein eL39 family.</text>
</comment>
<reference key="1">
    <citation type="journal article" date="2011" name="Nature">
        <title>A high-resolution map of human evolutionary constraint using 29 mammals.</title>
        <authorList>
            <person name="Lindblad-Toh K."/>
            <person name="Garber M."/>
            <person name="Zuk O."/>
            <person name="Lin M.F."/>
            <person name="Parker B.J."/>
            <person name="Washietl S."/>
            <person name="Kheradpour P."/>
            <person name="Ernst J."/>
            <person name="Jordan G."/>
            <person name="Mauceli E."/>
            <person name="Ward L.D."/>
            <person name="Lowe C.B."/>
            <person name="Holloway A.K."/>
            <person name="Clamp M."/>
            <person name="Gnerre S."/>
            <person name="Alfoldi J."/>
            <person name="Beal K."/>
            <person name="Chang J."/>
            <person name="Clawson H."/>
            <person name="Cuff J."/>
            <person name="Di Palma F."/>
            <person name="Fitzgerald S."/>
            <person name="Flicek P."/>
            <person name="Guttman M."/>
            <person name="Hubisz M.J."/>
            <person name="Jaffe D.B."/>
            <person name="Jungreis I."/>
            <person name="Kent W.J."/>
            <person name="Kostka D."/>
            <person name="Lara M."/>
            <person name="Martins A.L."/>
            <person name="Massingham T."/>
            <person name="Moltke I."/>
            <person name="Raney B.J."/>
            <person name="Rasmussen M.D."/>
            <person name="Robinson J."/>
            <person name="Stark A."/>
            <person name="Vilella A.J."/>
            <person name="Wen J."/>
            <person name="Xie X."/>
            <person name="Zody M.C."/>
            <person name="Baldwin J."/>
            <person name="Bloom T."/>
            <person name="Chin C.W."/>
            <person name="Heiman D."/>
            <person name="Nicol R."/>
            <person name="Nusbaum C."/>
            <person name="Young S."/>
            <person name="Wilkinson J."/>
            <person name="Worley K.C."/>
            <person name="Kovar C.L."/>
            <person name="Muzny D.M."/>
            <person name="Gibbs R.A."/>
            <person name="Cree A."/>
            <person name="Dihn H.H."/>
            <person name="Fowler G."/>
            <person name="Jhangiani S."/>
            <person name="Joshi V."/>
            <person name="Lee S."/>
            <person name="Lewis L.R."/>
            <person name="Nazareth L.V."/>
            <person name="Okwuonu G."/>
            <person name="Santibanez J."/>
            <person name="Warren W.C."/>
            <person name="Mardis E.R."/>
            <person name="Weinstock G.M."/>
            <person name="Wilson R.K."/>
            <person name="Delehaunty K."/>
            <person name="Dooling D."/>
            <person name="Fronik C."/>
            <person name="Fulton L."/>
            <person name="Fulton B."/>
            <person name="Graves T."/>
            <person name="Minx P."/>
            <person name="Sodergren E."/>
            <person name="Birney E."/>
            <person name="Margulies E.H."/>
            <person name="Herrero J."/>
            <person name="Green E.D."/>
            <person name="Haussler D."/>
            <person name="Siepel A."/>
            <person name="Goldman N."/>
            <person name="Pollard K.S."/>
            <person name="Pedersen J.S."/>
            <person name="Lander E.S."/>
            <person name="Kellis M."/>
        </authorList>
    </citation>
    <scope>NUCLEOTIDE SEQUENCE [LARGE SCALE GENOMIC DNA]</scope>
    <source>
        <strain>Thorbecke</strain>
    </source>
</reference>
<reference evidence="17 18" key="2">
    <citation type="journal article" date="2015" name="Nature">
        <title>Structural basis for stop codon recognition in eukaryotes.</title>
        <authorList>
            <person name="Brown A."/>
            <person name="Shao S."/>
            <person name="Murray J."/>
            <person name="Hegde R.S."/>
            <person name="Ramakrishnan V."/>
        </authorList>
    </citation>
    <scope>STRUCTURE BY ELECTRON MICROSCOPY (3.45 ANGSTROMS) OF 2-51 OF RIBOSOME</scope>
    <scope>FUNCTION</scope>
    <scope>SUBCELLULAR LOCATION</scope>
    <scope>SUBUNIT</scope>
</reference>
<reference evidence="19 20" key="3">
    <citation type="journal article" date="2016" name="Cell">
        <title>Decoding mammalian ribosome-mRNA states by translational GTPase complexes.</title>
        <authorList>
            <person name="Shao S."/>
            <person name="Murray J."/>
            <person name="Brown A."/>
            <person name="Taunton J."/>
            <person name="Ramakrishnan V."/>
            <person name="Hegde R.S."/>
        </authorList>
    </citation>
    <scope>STRUCTURE BY ELECTRON MICROSCOPY (3.31 ANGSTROMS) OF RIBOSOME</scope>
    <scope>FUNCTION</scope>
    <scope>SUBCELLULAR LOCATION</scope>
    <scope>SUBUNIT</scope>
</reference>
<reference evidence="23" key="4">
    <citation type="journal article" date="2018" name="Cell Rep.">
        <title>tRNA translocation by the eukaryotic 80S ribosome and the impact of GTP hydrolysis.</title>
        <authorList>
            <person name="Flis J."/>
            <person name="Holm M."/>
            <person name="Rundlet E.J."/>
            <person name="Loerke J."/>
            <person name="Hilal T."/>
            <person name="Dabrowski M."/>
            <person name="Burger J."/>
            <person name="Mielke T."/>
            <person name="Blanchard S.C."/>
            <person name="Spahn C.M.T."/>
            <person name="Budkevich T.V."/>
        </authorList>
    </citation>
    <scope>STRUCTURE BY ELECTRON MICROSCOPY (3.60 ANGSTROMS) OF 2-51 OF RIBOSOME</scope>
    <scope>FUNCTION</scope>
    <scope>SUBCELLULAR LOCATION</scope>
    <scope>SUBUNIT</scope>
</reference>
<reference evidence="21 22" key="5">
    <citation type="journal article" date="2018" name="Elife">
        <title>Dual tRNA mimicry in the Cricket paralysis virus IRES uncovers an unexpected similarity with the Hepatitis C Virus IRES.</title>
        <authorList>
            <person name="Pisareva V.P."/>
            <person name="Pisarev A.V."/>
            <person name="Fernandez I.S."/>
        </authorList>
    </citation>
    <scope>STRUCTURE BY ELECTRON MICROSCOPY (3.20 ANGSTROMS) OF RIBOSOME</scope>
    <scope>SUBCELLULAR LOCATION</scope>
    <scope>SUBUNIT</scope>
</reference>
<reference evidence="25 26" key="6">
    <citation type="journal article" date="2018" name="Elife">
        <title>Structures of translationally inactive mammalian ribosomes.</title>
        <authorList>
            <person name="Brown A."/>
            <person name="Baird M.R."/>
            <person name="Yip M.C."/>
            <person name="Murray J."/>
            <person name="Shao S."/>
        </authorList>
    </citation>
    <scope>STRUCTURE BY ELECTRON MICROSCOPY (3.30 ANGSTROMS) OF 1-107 OF RIBOSOME</scope>
    <scope>SUBCELLULAR LOCATION</scope>
    <scope>SUBUNIT</scope>
</reference>
<reference evidence="24" key="7">
    <citation type="journal article" date="2018" name="Mol. Cell">
        <title>ZNF598 is a quality control sensor of collided ribosomes.</title>
        <authorList>
            <person name="Juszkiewicz S."/>
            <person name="Chandrasekaran V."/>
            <person name="Lin Z."/>
            <person name="Kraatz S."/>
            <person name="Ramakrishnan V."/>
            <person name="Hegde R.S."/>
        </authorList>
    </citation>
    <scope>STRUCTURE BY ELECTRON MICROSCOPY (3.80 ANGSTROMS) OF RIBOSOME</scope>
    <scope>SUBCELLULAR LOCATION</scope>
    <scope>SUBUNIT</scope>
</reference>
<reference evidence="29 30" key="8">
    <citation type="journal article" date="2019" name="Elife">
        <title>Structural and mutational analysis of the ribosome-arresting human XBP1u.</title>
        <authorList>
            <person name="Shanmuganathan V."/>
            <person name="Schiller N."/>
            <person name="Magoulopoulou A."/>
            <person name="Cheng J."/>
            <person name="Braunger K."/>
            <person name="Cymer F."/>
            <person name="Berninghausen O."/>
            <person name="Beatrix B."/>
            <person name="Kohno K."/>
            <person name="von Heijne G."/>
            <person name="Beckmann R."/>
        </authorList>
    </citation>
    <scope>STRUCTURE BY ELECTRON MICROSCOPY (3.00 ANGSTROMS) OF 2-51 OF RIBOSOME</scope>
    <scope>SUBCELLULAR LOCATION</scope>
    <scope>SUBUNIT</scope>
</reference>
<reference evidence="27 28" key="9">
    <citation type="journal article" date="2019" name="EMBO J.">
        <title>The Israeli acute paralysis virus IRES captures host ribosomes by mimicking a ribosomal state with hybrid tRNAs.</title>
        <authorList>
            <person name="Acosta-Reyes F."/>
            <person name="Neupane R."/>
            <person name="Frank J."/>
            <person name="Fernandez I.S."/>
        </authorList>
    </citation>
    <scope>STRUCTURE BY ELECTRON MICROSCOPY (3.10 ANGSTROMS) OF RIBOSOME</scope>
    <scope>SUBUNIT</scope>
    <scope>SUBCELLULAR LOCATION</scope>
</reference>
<reference evidence="31" key="10">
    <citation type="journal article" date="2019" name="Nat. Struct. Mol. Biol.">
        <title>Mechanism of ribosome stalling during translation of a poly(A) tail.</title>
        <authorList>
            <person name="Chandrasekaran V."/>
            <person name="Juszkiewicz S."/>
            <person name="Choi J."/>
            <person name="Puglisi J.D."/>
            <person name="Brown A."/>
            <person name="Shao S."/>
            <person name="Ramakrishnan V."/>
            <person name="Hegde R.S."/>
        </authorList>
    </citation>
    <scope>STRUCTURE BY ELECTRON MICROSCOPY (2.80 ANGSTROMS) OF RIBOSOME</scope>
    <scope>SUBCELLULAR LOCATION</scope>
    <scope>SUBUNIT</scope>
</reference>
<reference evidence="32 33" key="11">
    <citation type="journal article" date="2020" name="Cell Rep.">
        <title>The Halastavi arva virus intergenic region IRES promotes translation by the simplest possible initiation mechanism.</title>
        <authorList>
            <person name="Abaeva I.S."/>
            <person name="Vicens Q."/>
            <person name="Bochler A."/>
            <person name="Soufari H."/>
            <person name="Simonetti A."/>
            <person name="Pestova T.V."/>
            <person name="Hashem Y."/>
            <person name="Hellen C.U.T."/>
        </authorList>
    </citation>
    <scope>STRUCTURE BY ELECTRON MICROSCOPY (3.49 ANGSTROMS) OF 2-51 OF RIBOSOME</scope>
    <scope>SUBCELLULAR LOCATION</scope>
    <scope>SUBUNIT</scope>
</reference>
<reference evidence="35 36" key="12">
    <citation type="journal article" date="2022" name="Mol. Cell">
        <title>Direct epitranscriptomic regulation of mammalian translation initiation through N4-acetylcytidine.</title>
        <authorList>
            <person name="Arango D."/>
            <person name="Sturgill D."/>
            <person name="Yang R."/>
            <person name="Kanai T."/>
            <person name="Bauer P."/>
            <person name="Roy J."/>
            <person name="Wang Z."/>
            <person name="Hosogane M."/>
            <person name="Schiffers S."/>
            <person name="Oberdoerffer S."/>
        </authorList>
    </citation>
    <scope>STRUCTURE BY ELECTRON MICROSCOPY (2.80 ANGSTROMS) OF RIBOSOME</scope>
    <scope>SUBCELLULAR LOCATION</scope>
    <scope>SUBUNIT</scope>
</reference>
<reference evidence="37 38" key="13">
    <citation type="journal article" date="2022" name="Science">
        <title>Structure of the mammalian ribosome as it decodes the selenocysteine UGA codon.</title>
        <authorList>
            <person name="Hilal T."/>
            <person name="Killam B.Y."/>
            <person name="Grozdanovic M."/>
            <person name="Dobosz-Bartoszek M."/>
            <person name="Loerke J."/>
            <person name="Buerger J."/>
            <person name="Mielke T."/>
            <person name="Copeland P.R."/>
            <person name="Simonovic M."/>
            <person name="Spahn C.M.T."/>
        </authorList>
    </citation>
    <scope>STRUCTURE BY ELECTRON MICROSCOPY (2.80 ANGSTROMS) OF RIBOSOME</scope>
    <scope>SUBCELLULAR LOCATION</scope>
    <scope>SUBUNIT</scope>
</reference>
<reference evidence="34" key="14">
    <citation type="journal article" date="2023" name="Nature">
        <title>A molecular network of conserved factors keeps ribosomes dormant in the egg.</title>
        <authorList>
            <person name="Leesch F."/>
            <person name="Lorenzo-Orts L."/>
            <person name="Pribitzer C."/>
            <person name="Grishkovskaya I."/>
            <person name="Roehsner J."/>
            <person name="Chugunova A."/>
            <person name="Matzinger M."/>
            <person name="Roitinger E."/>
            <person name="Belacic K."/>
            <person name="Kandolf S."/>
            <person name="Lin T.Y."/>
            <person name="Mechtler K."/>
            <person name="Meinhart A."/>
            <person name="Haselbach D."/>
            <person name="Pauli A."/>
        </authorList>
    </citation>
    <scope>STRUCTURE BY ELECTRON MICROSCOPY (2.30 ANGSTROMS) OF RIBOSOME</scope>
    <scope>SUBCELLULAR LOCATION</scope>
    <scope>SUBUNIT</scope>
</reference>
<gene>
    <name type="primary">RPL39</name>
</gene>
<name>RL39_RABIT</name>
<evidence type="ECO:0000250" key="1">
    <source>
        <dbReference type="UniProtKB" id="P62891"/>
    </source>
</evidence>
<evidence type="ECO:0000250" key="2">
    <source>
        <dbReference type="UniProtKB" id="P62892"/>
    </source>
</evidence>
<evidence type="ECO:0000269" key="3">
    <source>
    </source>
</evidence>
<evidence type="ECO:0000269" key="4">
    <source>
    </source>
</evidence>
<evidence type="ECO:0000269" key="5">
    <source>
    </source>
</evidence>
<evidence type="ECO:0000269" key="6">
    <source>
    </source>
</evidence>
<evidence type="ECO:0000269" key="7">
    <source>
    </source>
</evidence>
<evidence type="ECO:0000269" key="8">
    <source>
    </source>
</evidence>
<evidence type="ECO:0000269" key="9">
    <source>
    </source>
</evidence>
<evidence type="ECO:0000269" key="10">
    <source>
    </source>
</evidence>
<evidence type="ECO:0000269" key="11">
    <source>
    </source>
</evidence>
<evidence type="ECO:0000269" key="12">
    <source>
    </source>
</evidence>
<evidence type="ECO:0000269" key="13">
    <source>
    </source>
</evidence>
<evidence type="ECO:0000269" key="14">
    <source>
    </source>
</evidence>
<evidence type="ECO:0000269" key="15">
    <source>
    </source>
</evidence>
<evidence type="ECO:0000305" key="16"/>
<evidence type="ECO:0007744" key="17">
    <source>
        <dbReference type="PDB" id="3JAG"/>
    </source>
</evidence>
<evidence type="ECO:0007744" key="18">
    <source>
        <dbReference type="PDB" id="3JAH"/>
    </source>
</evidence>
<evidence type="ECO:0007744" key="19">
    <source>
        <dbReference type="PDB" id="5LZS"/>
    </source>
</evidence>
<evidence type="ECO:0007744" key="20">
    <source>
        <dbReference type="PDB" id="5LZT"/>
    </source>
</evidence>
<evidence type="ECO:0007744" key="21">
    <source>
        <dbReference type="PDB" id="6D90"/>
    </source>
</evidence>
<evidence type="ECO:0007744" key="22">
    <source>
        <dbReference type="PDB" id="6D9J"/>
    </source>
</evidence>
<evidence type="ECO:0007744" key="23">
    <source>
        <dbReference type="PDB" id="6GZ3"/>
    </source>
</evidence>
<evidence type="ECO:0007744" key="24">
    <source>
        <dbReference type="PDB" id="6HCM"/>
    </source>
</evidence>
<evidence type="ECO:0007744" key="25">
    <source>
        <dbReference type="PDB" id="6MTB"/>
    </source>
</evidence>
<evidence type="ECO:0007744" key="26">
    <source>
        <dbReference type="PDB" id="6MTC"/>
    </source>
</evidence>
<evidence type="ECO:0007744" key="27">
    <source>
        <dbReference type="PDB" id="6P5I"/>
    </source>
</evidence>
<evidence type="ECO:0007744" key="28">
    <source>
        <dbReference type="PDB" id="6P5J"/>
    </source>
</evidence>
<evidence type="ECO:0007744" key="29">
    <source>
        <dbReference type="PDB" id="6R5Q"/>
    </source>
</evidence>
<evidence type="ECO:0007744" key="30">
    <source>
        <dbReference type="PDB" id="6R6G"/>
    </source>
</evidence>
<evidence type="ECO:0007744" key="31">
    <source>
        <dbReference type="PDB" id="6SGC"/>
    </source>
</evidence>
<evidence type="ECO:0007744" key="32">
    <source>
        <dbReference type="PDB" id="6ZVK"/>
    </source>
</evidence>
<evidence type="ECO:0007744" key="33">
    <source>
        <dbReference type="PDB" id="7A01"/>
    </source>
</evidence>
<evidence type="ECO:0007744" key="34">
    <source>
        <dbReference type="PDB" id="7OYD"/>
    </source>
</evidence>
<evidence type="ECO:0007744" key="35">
    <source>
        <dbReference type="PDB" id="7UCJ"/>
    </source>
</evidence>
<evidence type="ECO:0007744" key="36">
    <source>
        <dbReference type="PDB" id="7UCK"/>
    </source>
</evidence>
<evidence type="ECO:0007744" key="37">
    <source>
        <dbReference type="PDB" id="7ZJW"/>
    </source>
</evidence>
<evidence type="ECO:0007744" key="38">
    <source>
        <dbReference type="PDB" id="7ZJX"/>
    </source>
</evidence>
<organism>
    <name type="scientific">Oryctolagus cuniculus</name>
    <name type="common">Rabbit</name>
    <dbReference type="NCBI Taxonomy" id="9986"/>
    <lineage>
        <taxon>Eukaryota</taxon>
        <taxon>Metazoa</taxon>
        <taxon>Chordata</taxon>
        <taxon>Craniata</taxon>
        <taxon>Vertebrata</taxon>
        <taxon>Euteleostomi</taxon>
        <taxon>Mammalia</taxon>
        <taxon>Eutheria</taxon>
        <taxon>Euarchontoglires</taxon>
        <taxon>Glires</taxon>
        <taxon>Lagomorpha</taxon>
        <taxon>Leporidae</taxon>
        <taxon>Oryctolagus</taxon>
    </lineage>
</organism>
<protein>
    <recommendedName>
        <fullName>Large ribosomal subunit protein eL39</fullName>
    </recommendedName>
    <alternativeName>
        <fullName>60S ribosomal protein L39</fullName>
    </alternativeName>
</protein>
<sequence>MSSHKTFRIKRFLAKKQKQNRPIPQWIRMKTGNKIRYNSKRRHWRRTKLGL</sequence>
<accession>G1SYU7</accession>
<dbReference type="EMBL" id="AAGW02009902">
    <property type="status" value="NOT_ANNOTATED_CDS"/>
    <property type="molecule type" value="Genomic_DNA"/>
</dbReference>
<dbReference type="EMBL" id="AAGW02022453">
    <property type="status" value="NOT_ANNOTATED_CDS"/>
    <property type="molecule type" value="Genomic_DNA"/>
</dbReference>
<dbReference type="EMBL" id="AAGW02041626">
    <property type="status" value="NOT_ANNOTATED_CDS"/>
    <property type="molecule type" value="Genomic_DNA"/>
</dbReference>
<dbReference type="EMBL" id="AAGW02041768">
    <property type="status" value="NOT_ANNOTATED_CDS"/>
    <property type="molecule type" value="Genomic_DNA"/>
</dbReference>
<dbReference type="EMBL" id="AAGW02052034">
    <property type="status" value="NOT_ANNOTATED_CDS"/>
    <property type="molecule type" value="Genomic_DNA"/>
</dbReference>
<dbReference type="RefSeq" id="XP_017198207.1">
    <property type="nucleotide sequence ID" value="XM_017342718.1"/>
</dbReference>
<dbReference type="RefSeq" id="XP_017200583.1">
    <property type="nucleotide sequence ID" value="XM_017345094.1"/>
</dbReference>
<dbReference type="RefSeq" id="XP_017202894.1">
    <property type="nucleotide sequence ID" value="XM_017347405.1"/>
</dbReference>
<dbReference type="RefSeq" id="XP_017205184.1">
    <property type="nucleotide sequence ID" value="XM_017349695.1"/>
</dbReference>
<dbReference type="RefSeq" id="XP_017205433.1">
    <property type="nucleotide sequence ID" value="XM_017349944.3"/>
</dbReference>
<dbReference type="PDB" id="3JAG">
    <property type="method" value="EM"/>
    <property type="resolution" value="3.65 A"/>
    <property type="chains" value="l=2-51"/>
</dbReference>
<dbReference type="PDB" id="3JAH">
    <property type="method" value="EM"/>
    <property type="resolution" value="3.45 A"/>
    <property type="chains" value="l=2-51"/>
</dbReference>
<dbReference type="PDB" id="3JAI">
    <property type="method" value="EM"/>
    <property type="resolution" value="3.65 A"/>
    <property type="chains" value="l=2-51"/>
</dbReference>
<dbReference type="PDB" id="5LZS">
    <property type="method" value="EM"/>
    <property type="resolution" value="3.31 A"/>
    <property type="chains" value="l=1-51"/>
</dbReference>
<dbReference type="PDB" id="5LZT">
    <property type="method" value="EM"/>
    <property type="resolution" value="3.65 A"/>
    <property type="chains" value="l=1-51"/>
</dbReference>
<dbReference type="PDB" id="5LZU">
    <property type="method" value="EM"/>
    <property type="resolution" value="3.75 A"/>
    <property type="chains" value="l=1-51"/>
</dbReference>
<dbReference type="PDB" id="5LZV">
    <property type="method" value="EM"/>
    <property type="resolution" value="3.35 A"/>
    <property type="chains" value="l=1-51"/>
</dbReference>
<dbReference type="PDB" id="5LZW">
    <property type="method" value="EM"/>
    <property type="resolution" value="3.53 A"/>
    <property type="chains" value="l=1-51"/>
</dbReference>
<dbReference type="PDB" id="5LZX">
    <property type="method" value="EM"/>
    <property type="resolution" value="3.67 A"/>
    <property type="chains" value="l=1-51"/>
</dbReference>
<dbReference type="PDB" id="5LZY">
    <property type="method" value="EM"/>
    <property type="resolution" value="3.99 A"/>
    <property type="chains" value="l=1-51"/>
</dbReference>
<dbReference type="PDB" id="5LZZ">
    <property type="method" value="EM"/>
    <property type="resolution" value="3.47 A"/>
    <property type="chains" value="l=1-51"/>
</dbReference>
<dbReference type="PDB" id="6D90">
    <property type="method" value="EM"/>
    <property type="resolution" value="3.20 A"/>
    <property type="chains" value="l=1-51"/>
</dbReference>
<dbReference type="PDB" id="6D9J">
    <property type="method" value="EM"/>
    <property type="resolution" value="3.20 A"/>
    <property type="chains" value="l=1-51"/>
</dbReference>
<dbReference type="PDB" id="6FTG">
    <property type="method" value="EM"/>
    <property type="resolution" value="9.10 A"/>
    <property type="chains" value="l=2-51"/>
</dbReference>
<dbReference type="PDB" id="6FTI">
    <property type="method" value="EM"/>
    <property type="resolution" value="4.20 A"/>
    <property type="chains" value="l=2-51"/>
</dbReference>
<dbReference type="PDB" id="6FTJ">
    <property type="method" value="EM"/>
    <property type="resolution" value="4.70 A"/>
    <property type="chains" value="l=2-51"/>
</dbReference>
<dbReference type="PDB" id="6GZ3">
    <property type="method" value="EM"/>
    <property type="resolution" value="3.60 A"/>
    <property type="chains" value="Al=2-51"/>
</dbReference>
<dbReference type="PDB" id="6HCF">
    <property type="method" value="EM"/>
    <property type="resolution" value="3.90 A"/>
    <property type="chains" value="l3=1-51"/>
</dbReference>
<dbReference type="PDB" id="6HCJ">
    <property type="method" value="EM"/>
    <property type="resolution" value="3.80 A"/>
    <property type="chains" value="l3=1-51"/>
</dbReference>
<dbReference type="PDB" id="6HCM">
    <property type="method" value="EM"/>
    <property type="resolution" value="6.80 A"/>
    <property type="chains" value="l3=1-51"/>
</dbReference>
<dbReference type="PDB" id="6HCQ">
    <property type="method" value="EM"/>
    <property type="resolution" value="6.50 A"/>
    <property type="chains" value="l3=1-51"/>
</dbReference>
<dbReference type="PDB" id="6MTB">
    <property type="method" value="EM"/>
    <property type="resolution" value="3.60 A"/>
    <property type="chains" value="l=2-51"/>
</dbReference>
<dbReference type="PDB" id="6MTC">
    <property type="method" value="EM"/>
    <property type="resolution" value="3.40 A"/>
    <property type="chains" value="l=2-51"/>
</dbReference>
<dbReference type="PDB" id="6MTD">
    <property type="method" value="EM"/>
    <property type="resolution" value="3.30 A"/>
    <property type="chains" value="l=2-51"/>
</dbReference>
<dbReference type="PDB" id="6MTE">
    <property type="method" value="EM"/>
    <property type="resolution" value="3.40 A"/>
    <property type="chains" value="l=2-51"/>
</dbReference>
<dbReference type="PDB" id="6P5I">
    <property type="method" value="EM"/>
    <property type="resolution" value="3.10 A"/>
    <property type="chains" value="Al=1-51"/>
</dbReference>
<dbReference type="PDB" id="6P5J">
    <property type="method" value="EM"/>
    <property type="resolution" value="3.10 A"/>
    <property type="chains" value="Al=1-51"/>
</dbReference>
<dbReference type="PDB" id="6P5K">
    <property type="method" value="EM"/>
    <property type="resolution" value="3.10 A"/>
    <property type="chains" value="Al=1-51"/>
</dbReference>
<dbReference type="PDB" id="6P5N">
    <property type="method" value="EM"/>
    <property type="resolution" value="3.20 A"/>
    <property type="chains" value="Al=1-51"/>
</dbReference>
<dbReference type="PDB" id="6R5Q">
    <property type="method" value="EM"/>
    <property type="resolution" value="3.00 A"/>
    <property type="chains" value="l=2-51"/>
</dbReference>
<dbReference type="PDB" id="6R6G">
    <property type="method" value="EM"/>
    <property type="resolution" value="3.70 A"/>
    <property type="chains" value="l=2-51"/>
</dbReference>
<dbReference type="PDB" id="6R6P">
    <property type="method" value="EM"/>
    <property type="resolution" value="3.10 A"/>
    <property type="chains" value="l=2-51"/>
</dbReference>
<dbReference type="PDB" id="6R7Q">
    <property type="method" value="EM"/>
    <property type="resolution" value="3.90 A"/>
    <property type="chains" value="l=2-51"/>
</dbReference>
<dbReference type="PDB" id="6SGC">
    <property type="method" value="EM"/>
    <property type="resolution" value="2.80 A"/>
    <property type="chains" value="l2=1-51"/>
</dbReference>
<dbReference type="PDB" id="6T59">
    <property type="method" value="EM"/>
    <property type="resolution" value="3.11 A"/>
    <property type="chains" value="l3=1-51"/>
</dbReference>
<dbReference type="PDB" id="6ZVK">
    <property type="method" value="EM"/>
    <property type="resolution" value="3.49 A"/>
    <property type="chains" value="D2=2-51"/>
</dbReference>
<dbReference type="PDB" id="7A01">
    <property type="method" value="EM"/>
    <property type="resolution" value="3.60 A"/>
    <property type="chains" value="D2=2-51"/>
</dbReference>
<dbReference type="PDB" id="7MDZ">
    <property type="method" value="EM"/>
    <property type="resolution" value="3.20 A"/>
    <property type="chains" value="l=1-51"/>
</dbReference>
<dbReference type="PDB" id="7NFX">
    <property type="method" value="EM"/>
    <property type="resolution" value="3.20 A"/>
    <property type="chains" value="l=1-51"/>
</dbReference>
<dbReference type="PDB" id="7NWG">
    <property type="method" value="EM"/>
    <property type="resolution" value="3.80 A"/>
    <property type="chains" value="l3=2-51"/>
</dbReference>
<dbReference type="PDB" id="7NWH">
    <property type="method" value="EM"/>
    <property type="resolution" value="4.10 A"/>
    <property type="chains" value="l=1-51"/>
</dbReference>
<dbReference type="PDB" id="7NWI">
    <property type="method" value="EM"/>
    <property type="resolution" value="3.13 A"/>
    <property type="chains" value="l=2-51"/>
</dbReference>
<dbReference type="PDB" id="7O7Y">
    <property type="method" value="EM"/>
    <property type="resolution" value="2.20 A"/>
    <property type="chains" value="Bl=1-51"/>
</dbReference>
<dbReference type="PDB" id="7O7Z">
    <property type="method" value="EM"/>
    <property type="resolution" value="2.40 A"/>
    <property type="chains" value="Bl=1-51"/>
</dbReference>
<dbReference type="PDB" id="7O80">
    <property type="method" value="EM"/>
    <property type="resolution" value="2.90 A"/>
    <property type="chains" value="Bl=1-51"/>
</dbReference>
<dbReference type="PDB" id="7O81">
    <property type="method" value="EM"/>
    <property type="resolution" value="3.10 A"/>
    <property type="chains" value="Bl=1-51"/>
</dbReference>
<dbReference type="PDB" id="7OBR">
    <property type="method" value="EM"/>
    <property type="resolution" value="2.80 A"/>
    <property type="chains" value="l=1-51"/>
</dbReference>
<dbReference type="PDB" id="7OYD">
    <property type="method" value="EM"/>
    <property type="resolution" value="2.30 A"/>
    <property type="chains" value="l=1-51"/>
</dbReference>
<dbReference type="PDB" id="7QWQ">
    <property type="method" value="EM"/>
    <property type="resolution" value="2.83 A"/>
    <property type="chains" value="l=1-51"/>
</dbReference>
<dbReference type="PDB" id="7QWR">
    <property type="method" value="EM"/>
    <property type="resolution" value="2.90 A"/>
    <property type="chains" value="l=1-51"/>
</dbReference>
<dbReference type="PDB" id="7QWS">
    <property type="method" value="EM"/>
    <property type="resolution" value="3.40 A"/>
    <property type="chains" value="l=1-51"/>
</dbReference>
<dbReference type="PDB" id="7TM3">
    <property type="method" value="EM"/>
    <property type="resolution" value="3.25 A"/>
    <property type="chains" value="l=1-51"/>
</dbReference>
<dbReference type="PDB" id="7TOR">
    <property type="method" value="EM"/>
    <property type="resolution" value="2.90 A"/>
    <property type="chains" value="AL39=2-51"/>
</dbReference>
<dbReference type="PDB" id="7TUT">
    <property type="method" value="EM"/>
    <property type="resolution" value="3.88 A"/>
    <property type="chains" value="l=1-51"/>
</dbReference>
<dbReference type="PDB" id="7UCJ">
    <property type="method" value="EM"/>
    <property type="resolution" value="3.10 A"/>
    <property type="chains" value="l=2-51"/>
</dbReference>
<dbReference type="PDB" id="7UCK">
    <property type="method" value="EM"/>
    <property type="resolution" value="2.80 A"/>
    <property type="chains" value="l=2-51"/>
</dbReference>
<dbReference type="PDB" id="7ZJW">
    <property type="method" value="EM"/>
    <property type="resolution" value="2.80 A"/>
    <property type="chains" value="Lo=1-51"/>
</dbReference>
<dbReference type="PDB" id="7ZJX">
    <property type="method" value="EM"/>
    <property type="resolution" value="3.10 A"/>
    <property type="chains" value="Lo=1-51"/>
</dbReference>
<dbReference type="PDB" id="8B5L">
    <property type="method" value="EM"/>
    <property type="resolution" value="2.86 A"/>
    <property type="chains" value="l=2-51"/>
</dbReference>
<dbReference type="PDB" id="8B6C">
    <property type="method" value="EM"/>
    <property type="resolution" value="2.79 A"/>
    <property type="chains" value="l=2-51"/>
</dbReference>
<dbReference type="PDB" id="8BHF">
    <property type="method" value="EM"/>
    <property type="resolution" value="3.10 A"/>
    <property type="chains" value="Y1=2-51"/>
</dbReference>
<dbReference type="PDB" id="8BPO">
    <property type="method" value="EM"/>
    <property type="resolution" value="2.80 A"/>
    <property type="chains" value="k2=1-51"/>
</dbReference>
<dbReference type="PDB" id="8BTK">
    <property type="method" value="EM"/>
    <property type="resolution" value="3.50 A"/>
    <property type="chains" value="Bl=1-51"/>
</dbReference>
<dbReference type="PDB" id="8P2K">
    <property type="method" value="EM"/>
    <property type="resolution" value="2.90 A"/>
    <property type="chains" value="Bl=1-51"/>
</dbReference>
<dbReference type="PDBsum" id="3JAG"/>
<dbReference type="PDBsum" id="3JAH"/>
<dbReference type="PDBsum" id="3JAI"/>
<dbReference type="PDBsum" id="5LZS"/>
<dbReference type="PDBsum" id="5LZT"/>
<dbReference type="PDBsum" id="5LZU"/>
<dbReference type="PDBsum" id="5LZV"/>
<dbReference type="PDBsum" id="5LZW"/>
<dbReference type="PDBsum" id="5LZX"/>
<dbReference type="PDBsum" id="5LZY"/>
<dbReference type="PDBsum" id="5LZZ"/>
<dbReference type="PDBsum" id="6D90"/>
<dbReference type="PDBsum" id="6D9J"/>
<dbReference type="PDBsum" id="6FTG"/>
<dbReference type="PDBsum" id="6FTI"/>
<dbReference type="PDBsum" id="6FTJ"/>
<dbReference type="PDBsum" id="6GZ3"/>
<dbReference type="PDBsum" id="6HCF"/>
<dbReference type="PDBsum" id="6HCJ"/>
<dbReference type="PDBsum" id="6HCM"/>
<dbReference type="PDBsum" id="6HCQ"/>
<dbReference type="PDBsum" id="6MTB"/>
<dbReference type="PDBsum" id="6MTC"/>
<dbReference type="PDBsum" id="6MTD"/>
<dbReference type="PDBsum" id="6MTE"/>
<dbReference type="PDBsum" id="6P5I"/>
<dbReference type="PDBsum" id="6P5J"/>
<dbReference type="PDBsum" id="6P5K"/>
<dbReference type="PDBsum" id="6P5N"/>
<dbReference type="PDBsum" id="6R5Q"/>
<dbReference type="PDBsum" id="6R6G"/>
<dbReference type="PDBsum" id="6R6P"/>
<dbReference type="PDBsum" id="6R7Q"/>
<dbReference type="PDBsum" id="6SGC"/>
<dbReference type="PDBsum" id="6T59"/>
<dbReference type="PDBsum" id="6ZVK"/>
<dbReference type="PDBsum" id="7A01"/>
<dbReference type="PDBsum" id="7MDZ"/>
<dbReference type="PDBsum" id="7NFX"/>
<dbReference type="PDBsum" id="7NWG"/>
<dbReference type="PDBsum" id="7NWH"/>
<dbReference type="PDBsum" id="7NWI"/>
<dbReference type="PDBsum" id="7O7Y"/>
<dbReference type="PDBsum" id="7O7Z"/>
<dbReference type="PDBsum" id="7O80"/>
<dbReference type="PDBsum" id="7O81"/>
<dbReference type="PDBsum" id="7OBR"/>
<dbReference type="PDBsum" id="7OYD"/>
<dbReference type="PDBsum" id="7QWQ"/>
<dbReference type="PDBsum" id="7QWR"/>
<dbReference type="PDBsum" id="7QWS"/>
<dbReference type="PDBsum" id="7TM3"/>
<dbReference type="PDBsum" id="7TOR"/>
<dbReference type="PDBsum" id="7TUT"/>
<dbReference type="PDBsum" id="7UCJ"/>
<dbReference type="PDBsum" id="7UCK"/>
<dbReference type="PDBsum" id="7ZJW"/>
<dbReference type="PDBsum" id="7ZJX"/>
<dbReference type="PDBsum" id="8B5L"/>
<dbReference type="PDBsum" id="8B6C"/>
<dbReference type="PDBsum" id="8BHF"/>
<dbReference type="PDBsum" id="8BPO"/>
<dbReference type="PDBsum" id="8BTK"/>
<dbReference type="PDBsum" id="8P2K"/>
<dbReference type="EMDB" id="EMD-0098"/>
<dbReference type="EMDB" id="EMD-10181"/>
<dbReference type="EMDB" id="EMD-11459"/>
<dbReference type="EMDB" id="EMD-11590"/>
<dbReference type="EMDB" id="EMD-12303"/>
<dbReference type="EMDB" id="EMD-12633"/>
<dbReference type="EMDB" id="EMD-12801"/>
<dbReference type="EMDB" id="EMD-14191"/>
<dbReference type="EMDB" id="EMD-14192"/>
<dbReference type="EMDB" id="EMD-14193"/>
<dbReference type="EMDB" id="EMD-15860"/>
<dbReference type="EMDB" id="EMD-15863"/>
<dbReference type="EMDB" id="EMD-4315"/>
<dbReference type="EMDB" id="EMD-4316"/>
<dbReference type="EMDB" id="EMD-4317"/>
<dbReference type="EMDB" id="EMD-4737"/>
<dbReference type="SMR" id="G1SYU7"/>
<dbReference type="FunCoup" id="G1SYU7">
    <property type="interactions" value="474"/>
</dbReference>
<dbReference type="STRING" id="9986.ENSOCUP00000008803"/>
<dbReference type="PaxDb" id="9986-ENSOCUP00000008803"/>
<dbReference type="Ensembl" id="ENSOCUT00000010212.3">
    <property type="protein sequence ID" value="ENSOCUP00000008803.2"/>
    <property type="gene ID" value="ENSOCUG00000023327.2"/>
</dbReference>
<dbReference type="Ensembl" id="ENSOCUT00000036790.1">
    <property type="protein sequence ID" value="ENSOCUP00000043440.1"/>
    <property type="gene ID" value="ENSOCUG00000038725.1"/>
</dbReference>
<dbReference type="Ensembl" id="ENSOCUT00000045800.1">
    <property type="protein sequence ID" value="ENSOCUP00000035316.1"/>
    <property type="gene ID" value="ENSOCUG00000038538.1"/>
</dbReference>
<dbReference type="Ensembl" id="ENSOCUT00000047757.1">
    <property type="protein sequence ID" value="ENSOCUP00000035739.1"/>
    <property type="gene ID" value="ENSOCUG00000039083.1"/>
</dbReference>
<dbReference type="Ensembl" id="ENSOCUT00000049216.1">
    <property type="protein sequence ID" value="ENSOCUP00000044553.1"/>
    <property type="gene ID" value="ENSOCUG00000038521.1"/>
</dbReference>
<dbReference type="Ensembl" id="ENSOCUT00000055854.1">
    <property type="protein sequence ID" value="ENSOCUP00000032765.1"/>
    <property type="gene ID" value="ENSOCUG00000033474.1"/>
</dbReference>
<dbReference type="GeneID" id="100355824"/>
<dbReference type="KEGG" id="ocu:100355824"/>
<dbReference type="KEGG" id="ocu:108177411"/>
<dbReference type="KEGG" id="ocu:108177423"/>
<dbReference type="KEGG" id="ocu:108178108"/>
<dbReference type="KEGG" id="ocu:108178711"/>
<dbReference type="KEGG" id="ocu:108178776"/>
<dbReference type="KEGG" id="ocu:108178831"/>
<dbReference type="CTD" id="6170"/>
<dbReference type="eggNOG" id="KOG0002">
    <property type="taxonomic scope" value="Eukaryota"/>
</dbReference>
<dbReference type="GeneTree" id="ENSGT00390000014814"/>
<dbReference type="HOGENOM" id="CLU_181948_3_0_1"/>
<dbReference type="OMA" id="RRTKMNI"/>
<dbReference type="OrthoDB" id="444696at2759"/>
<dbReference type="TreeFam" id="TF300223"/>
<dbReference type="Proteomes" id="UP000001811">
    <property type="component" value="Chromosome 12"/>
</dbReference>
<dbReference type="Proteomes" id="UP000001811">
    <property type="component" value="Chromosome 15"/>
</dbReference>
<dbReference type="Proteomes" id="UP000001811">
    <property type="component" value="Chromosome 2"/>
</dbReference>
<dbReference type="Proteomes" id="UP000001811">
    <property type="component" value="Chromosome X"/>
</dbReference>
<dbReference type="Bgee" id="ENSOCUG00000023327">
    <property type="expression patterns" value="Expressed in prefrontal cortex and 1 other cell type or tissue"/>
</dbReference>
<dbReference type="GO" id="GO:0022625">
    <property type="term" value="C:cytosolic large ribosomal subunit"/>
    <property type="evidence" value="ECO:0007669"/>
    <property type="project" value="TreeGrafter"/>
</dbReference>
<dbReference type="GO" id="GO:0003735">
    <property type="term" value="F:structural constituent of ribosome"/>
    <property type="evidence" value="ECO:0007669"/>
    <property type="project" value="InterPro"/>
</dbReference>
<dbReference type="GO" id="GO:0006412">
    <property type="term" value="P:translation"/>
    <property type="evidence" value="ECO:0007669"/>
    <property type="project" value="InterPro"/>
</dbReference>
<dbReference type="FunFam" id="1.10.1620.10:FF:000001">
    <property type="entry name" value="60S ribosomal protein-like L39"/>
    <property type="match status" value="1"/>
</dbReference>
<dbReference type="Gene3D" id="1.10.1620.10">
    <property type="entry name" value="Ribosomal protein L39e"/>
    <property type="match status" value="1"/>
</dbReference>
<dbReference type="HAMAP" id="MF_00629">
    <property type="entry name" value="Ribosomal_eL39"/>
    <property type="match status" value="1"/>
</dbReference>
<dbReference type="InterPro" id="IPR000077">
    <property type="entry name" value="Ribosomal_eL39"/>
</dbReference>
<dbReference type="InterPro" id="IPR020083">
    <property type="entry name" value="Ribosomal_eL39_CS"/>
</dbReference>
<dbReference type="InterPro" id="IPR023626">
    <property type="entry name" value="Ribosomal_eL39_dom_sf"/>
</dbReference>
<dbReference type="PANTHER" id="PTHR19970:SF0">
    <property type="entry name" value="LARGE RIBOSOMAL SUBUNIT PROTEIN EL39"/>
    <property type="match status" value="1"/>
</dbReference>
<dbReference type="PANTHER" id="PTHR19970">
    <property type="entry name" value="RIBOSOMAL PROTEIN L39E"/>
    <property type="match status" value="1"/>
</dbReference>
<dbReference type="Pfam" id="PF00832">
    <property type="entry name" value="Ribosomal_L39"/>
    <property type="match status" value="1"/>
</dbReference>
<dbReference type="SUPFAM" id="SSF48662">
    <property type="entry name" value="Ribosomal protein L39e"/>
    <property type="match status" value="1"/>
</dbReference>
<dbReference type="PROSITE" id="PS00051">
    <property type="entry name" value="RIBOSOMAL_L39E"/>
    <property type="match status" value="1"/>
</dbReference>
<feature type="chain" id="PRO_0000460131" description="Large ribosomal subunit protein eL39">
    <location>
        <begin position="1"/>
        <end position="51"/>
    </location>
</feature>